<sequence>MEEPASADPPRIFWKSRRRSASANGRSLQQELNKEAADEQLNNQAHEEAMKIDDANAVSTDDDVHPDPKANLSEKRKALFEPLEPINGKRSSAEMLLPPPDFEPASYPKGWLVGKKRKLVNVDVVESMRRIAIQEMNRKDREINGLNEQLEEDSRVLELLQKQLADERKKRTEIEKENSMLHEQVSMLMNMLDENEAFDEEGEAPPPDTL</sequence>
<evidence type="ECO:0000255" key="1"/>
<evidence type="ECO:0000256" key="2">
    <source>
        <dbReference type="SAM" id="MobiDB-lite"/>
    </source>
</evidence>
<evidence type="ECO:0000269" key="3">
    <source>
    </source>
</evidence>
<evidence type="ECO:0000303" key="4">
    <source>
    </source>
</evidence>
<evidence type="ECO:0000305" key="5"/>
<evidence type="ECO:0000312" key="6">
    <source>
        <dbReference type="EMBL" id="BAD19196.1"/>
    </source>
</evidence>
<evidence type="ECO:0000312" key="7">
    <source>
        <dbReference type="EMBL" id="BAD19664.1"/>
    </source>
</evidence>
<evidence type="ECO:0000312" key="8">
    <source>
        <dbReference type="EMBL" id="BAF10286.1"/>
    </source>
</evidence>
<evidence type="ECO:0000312" key="9">
    <source>
        <dbReference type="EMBL" id="BAS81341.1"/>
    </source>
</evidence>
<evidence type="ECO:0000312" key="10">
    <source>
        <dbReference type="EMBL" id="EEE57961.1"/>
    </source>
</evidence>
<reference key="1">
    <citation type="journal article" date="2005" name="Nature">
        <title>The map-based sequence of the rice genome.</title>
        <authorList>
            <consortium name="International rice genome sequencing project (IRGSP)"/>
        </authorList>
    </citation>
    <scope>NUCLEOTIDE SEQUENCE [LARGE SCALE GENOMIC DNA]</scope>
    <source>
        <strain>cv. Nipponbare</strain>
    </source>
</reference>
<reference key="2">
    <citation type="journal article" date="2008" name="Nucleic Acids Res.">
        <title>The rice annotation project database (RAP-DB): 2008 update.</title>
        <authorList>
            <consortium name="The rice annotation project (RAP)"/>
        </authorList>
    </citation>
    <scope>GENOME REANNOTATION</scope>
    <source>
        <strain>cv. Nipponbare</strain>
    </source>
</reference>
<reference key="3">
    <citation type="journal article" date="2013" name="Rice">
        <title>Improvement of the Oryza sativa Nipponbare reference genome using next generation sequence and optical map data.</title>
        <authorList>
            <person name="Kawahara Y."/>
            <person name="de la Bastide M."/>
            <person name="Hamilton J.P."/>
            <person name="Kanamori H."/>
            <person name="McCombie W.R."/>
            <person name="Ouyang S."/>
            <person name="Schwartz D.C."/>
            <person name="Tanaka T."/>
            <person name="Wu J."/>
            <person name="Zhou S."/>
            <person name="Childs K.L."/>
            <person name="Davidson R.M."/>
            <person name="Lin H."/>
            <person name="Quesada-Ocampo L."/>
            <person name="Vaillancourt B."/>
            <person name="Sakai H."/>
            <person name="Lee S.S."/>
            <person name="Kim J."/>
            <person name="Numa H."/>
            <person name="Itoh T."/>
            <person name="Buell C.R."/>
            <person name="Matsumoto T."/>
        </authorList>
    </citation>
    <scope>GENOME REANNOTATION</scope>
    <source>
        <strain>cv. Nipponbare</strain>
    </source>
</reference>
<reference key="4">
    <citation type="journal article" date="2005" name="PLoS Biol.">
        <title>The genomes of Oryza sativa: a history of duplications.</title>
        <authorList>
            <person name="Yu J."/>
            <person name="Wang J."/>
            <person name="Lin W."/>
            <person name="Li S."/>
            <person name="Li H."/>
            <person name="Zhou J."/>
            <person name="Ni P."/>
            <person name="Dong W."/>
            <person name="Hu S."/>
            <person name="Zeng C."/>
            <person name="Zhang J."/>
            <person name="Zhang Y."/>
            <person name="Li R."/>
            <person name="Xu Z."/>
            <person name="Li S."/>
            <person name="Li X."/>
            <person name="Zheng H."/>
            <person name="Cong L."/>
            <person name="Lin L."/>
            <person name="Yin J."/>
            <person name="Geng J."/>
            <person name="Li G."/>
            <person name="Shi J."/>
            <person name="Liu J."/>
            <person name="Lv H."/>
            <person name="Li J."/>
            <person name="Wang J."/>
            <person name="Deng Y."/>
            <person name="Ran L."/>
            <person name="Shi X."/>
            <person name="Wang X."/>
            <person name="Wu Q."/>
            <person name="Li C."/>
            <person name="Ren X."/>
            <person name="Wang J."/>
            <person name="Wang X."/>
            <person name="Li D."/>
            <person name="Liu D."/>
            <person name="Zhang X."/>
            <person name="Ji Z."/>
            <person name="Zhao W."/>
            <person name="Sun Y."/>
            <person name="Zhang Z."/>
            <person name="Bao J."/>
            <person name="Han Y."/>
            <person name="Dong L."/>
            <person name="Ji J."/>
            <person name="Chen P."/>
            <person name="Wu S."/>
            <person name="Liu J."/>
            <person name="Xiao Y."/>
            <person name="Bu D."/>
            <person name="Tan J."/>
            <person name="Yang L."/>
            <person name="Ye C."/>
            <person name="Zhang J."/>
            <person name="Xu J."/>
            <person name="Zhou Y."/>
            <person name="Yu Y."/>
            <person name="Zhang B."/>
            <person name="Zhuang S."/>
            <person name="Wei H."/>
            <person name="Liu B."/>
            <person name="Lei M."/>
            <person name="Yu H."/>
            <person name="Li Y."/>
            <person name="Xu H."/>
            <person name="Wei S."/>
            <person name="He X."/>
            <person name="Fang L."/>
            <person name="Zhang Z."/>
            <person name="Zhang Y."/>
            <person name="Huang X."/>
            <person name="Su Z."/>
            <person name="Tong W."/>
            <person name="Li J."/>
            <person name="Tong Z."/>
            <person name="Li S."/>
            <person name="Ye J."/>
            <person name="Wang L."/>
            <person name="Fang L."/>
            <person name="Lei T."/>
            <person name="Chen C.-S."/>
            <person name="Chen H.-C."/>
            <person name="Xu Z."/>
            <person name="Li H."/>
            <person name="Huang H."/>
            <person name="Zhang F."/>
            <person name="Xu H."/>
            <person name="Li N."/>
            <person name="Zhao C."/>
            <person name="Li S."/>
            <person name="Dong L."/>
            <person name="Huang Y."/>
            <person name="Li L."/>
            <person name="Xi Y."/>
            <person name="Qi Q."/>
            <person name="Li W."/>
            <person name="Zhang B."/>
            <person name="Hu W."/>
            <person name="Zhang Y."/>
            <person name="Tian X."/>
            <person name="Jiao Y."/>
            <person name="Liang X."/>
            <person name="Jin J."/>
            <person name="Gao L."/>
            <person name="Zheng W."/>
            <person name="Hao B."/>
            <person name="Liu S.-M."/>
            <person name="Wang W."/>
            <person name="Yuan L."/>
            <person name="Cao M."/>
            <person name="McDermott J."/>
            <person name="Samudrala R."/>
            <person name="Wang J."/>
            <person name="Wong G.K.-S."/>
            <person name="Yang H."/>
        </authorList>
    </citation>
    <scope>NUCLEOTIDE SEQUENCE [LARGE SCALE GENOMIC DNA]</scope>
    <source>
        <strain>cv. Nipponbare</strain>
    </source>
</reference>
<reference key="5">
    <citation type="journal article" date="2016" name="PLoS Genet.">
        <title>The Oryza sativa regulator HDR1 associates with the kinase OsK4 to control photoperiodic flowering.</title>
        <authorList>
            <person name="Sun X."/>
            <person name="Zhang Z."/>
            <person name="Wu J."/>
            <person name="Cui X."/>
            <person name="Feng D."/>
            <person name="Wang K."/>
            <person name="Xu M."/>
            <person name="Zhou L."/>
            <person name="Han X."/>
            <person name="Gu X."/>
            <person name="Lu T."/>
        </authorList>
    </citation>
    <scope>FUNCTION</scope>
    <scope>DISRUPTION PHENOTYPE</scope>
    <scope>TISSUE SPECIFICITY</scope>
    <scope>SUBCELLULAR LOCATION</scope>
    <scope>INDUCTION BY CIRCADIAN RHYTHM</scope>
    <scope>INTERACTION WITH OSK3 AND OSK4</scope>
</reference>
<feature type="chain" id="PRO_0000438036" description="Protein HEADING DATE REPRESSOR 1">
    <location>
        <begin position="1"/>
        <end position="210"/>
    </location>
</feature>
<feature type="region of interest" description="Disordered" evidence="2">
    <location>
        <begin position="1"/>
        <end position="97"/>
    </location>
</feature>
<feature type="coiled-coil region" evidence="1">
    <location>
        <begin position="29"/>
        <end position="49"/>
    </location>
</feature>
<feature type="coiled-coil region" evidence="1">
    <location>
        <begin position="129"/>
        <end position="184"/>
    </location>
</feature>
<feature type="compositionally biased region" description="Basic and acidic residues" evidence="2">
    <location>
        <begin position="45"/>
        <end position="54"/>
    </location>
</feature>
<feature type="compositionally biased region" description="Basic and acidic residues" evidence="2">
    <location>
        <begin position="62"/>
        <end position="79"/>
    </location>
</feature>
<dbReference type="EMBL" id="AP004054">
    <property type="protein sequence ID" value="BAD19196.1"/>
    <property type="molecule type" value="Genomic_DNA"/>
</dbReference>
<dbReference type="EMBL" id="AP005115">
    <property type="protein sequence ID" value="BAD19664.1"/>
    <property type="molecule type" value="Genomic_DNA"/>
</dbReference>
<dbReference type="EMBL" id="AP008208">
    <property type="protein sequence ID" value="BAF10286.1"/>
    <property type="molecule type" value="Genomic_DNA"/>
</dbReference>
<dbReference type="EMBL" id="AP014958">
    <property type="protein sequence ID" value="BAS81341.1"/>
    <property type="molecule type" value="Genomic_DNA"/>
</dbReference>
<dbReference type="EMBL" id="CM000139">
    <property type="protein sequence ID" value="EEE57961.1"/>
    <property type="molecule type" value="Genomic_DNA"/>
</dbReference>
<dbReference type="RefSeq" id="XP_015622570.1">
    <property type="nucleotide sequence ID" value="XM_015767084.1"/>
</dbReference>
<dbReference type="SMR" id="Q6K678"/>
<dbReference type="FunCoup" id="Q6K678">
    <property type="interactions" value="1766"/>
</dbReference>
<dbReference type="STRING" id="39947.Q6K678"/>
<dbReference type="PaxDb" id="39947-Q6K678"/>
<dbReference type="EnsemblPlants" id="Os02t0793900-01">
    <property type="protein sequence ID" value="Os02t0793900-01"/>
    <property type="gene ID" value="Os02g0793900"/>
</dbReference>
<dbReference type="Gramene" id="Os02t0793900-01">
    <property type="protein sequence ID" value="Os02t0793900-01"/>
    <property type="gene ID" value="Os02g0793900"/>
</dbReference>
<dbReference type="KEGG" id="dosa:Os02g0793900"/>
<dbReference type="eggNOG" id="ENOG502RXJT">
    <property type="taxonomic scope" value="Eukaryota"/>
</dbReference>
<dbReference type="HOGENOM" id="CLU_073521_0_0_1"/>
<dbReference type="InParanoid" id="Q6K678"/>
<dbReference type="OMA" id="TRIDWKP"/>
<dbReference type="OrthoDB" id="1907556at2759"/>
<dbReference type="Proteomes" id="UP000000763">
    <property type="component" value="Chromosome 2"/>
</dbReference>
<dbReference type="Proteomes" id="UP000007752">
    <property type="component" value="Chromosome 2"/>
</dbReference>
<dbReference type="Proteomes" id="UP000059680">
    <property type="component" value="Chromosome 2"/>
</dbReference>
<dbReference type="GO" id="GO:0005634">
    <property type="term" value="C:nucleus"/>
    <property type="evidence" value="ECO:0007669"/>
    <property type="project" value="UniProtKB-SubCell"/>
</dbReference>
<dbReference type="GO" id="GO:0009908">
    <property type="term" value="P:flower development"/>
    <property type="evidence" value="ECO:0007669"/>
    <property type="project" value="UniProtKB-KW"/>
</dbReference>
<dbReference type="GO" id="GO:0009909">
    <property type="term" value="P:regulation of flower development"/>
    <property type="evidence" value="ECO:0007669"/>
    <property type="project" value="InterPro"/>
</dbReference>
<dbReference type="InterPro" id="IPR038864">
    <property type="entry name" value="HDR1"/>
</dbReference>
<dbReference type="PANTHER" id="PTHR37205">
    <property type="entry name" value="F23A5.30 PROTEIN"/>
    <property type="match status" value="1"/>
</dbReference>
<dbReference type="PANTHER" id="PTHR37205:SF1">
    <property type="entry name" value="F23A5.30 PROTEIN"/>
    <property type="match status" value="1"/>
</dbReference>
<organism>
    <name type="scientific">Oryza sativa subsp. japonica</name>
    <name type="common">Rice</name>
    <dbReference type="NCBI Taxonomy" id="39947"/>
    <lineage>
        <taxon>Eukaryota</taxon>
        <taxon>Viridiplantae</taxon>
        <taxon>Streptophyta</taxon>
        <taxon>Embryophyta</taxon>
        <taxon>Tracheophyta</taxon>
        <taxon>Spermatophyta</taxon>
        <taxon>Magnoliopsida</taxon>
        <taxon>Liliopsida</taxon>
        <taxon>Poales</taxon>
        <taxon>Poaceae</taxon>
        <taxon>BOP clade</taxon>
        <taxon>Oryzoideae</taxon>
        <taxon>Oryzeae</taxon>
        <taxon>Oryzinae</taxon>
        <taxon>Oryza</taxon>
        <taxon>Oryza sativa</taxon>
    </lineage>
</organism>
<comment type="function">
    <text evidence="3">Regulates flowering time via a photoperiod-dependent pathway. Suppressor of flowering that upregulates HD1 and down-regulates EHD1 in long days (LD), thus leading to the down-regulation of HD3A and RFT1. Triggers OSK4-mediated HD1 phosphorylation.</text>
</comment>
<comment type="subunit">
    <text evidence="3">Interacts with OSK3 and OSK4.</text>
</comment>
<comment type="subcellular location">
    <subcellularLocation>
        <location evidence="3">Nucleus</location>
    </subcellularLocation>
</comment>
<comment type="tissue specificity">
    <text evidence="3">Mostly expressed in leaves, seedlings and floral organs, and, to a lower extent, in panicle, roots, nodes, internodes, leaf joint and sheath.</text>
</comment>
<comment type="induction">
    <text evidence="3">Follows a diurnal expression pattern; levels increase after dusk, reach a peak before dawn, and damp rapidly thereafter.</text>
</comment>
<comment type="disruption phenotype">
    <text evidence="3">Slightly shorter plant. Early flowering phenotype in long days (LD) but not in short days (SD).</text>
</comment>
<name>HDR1_ORYSJ</name>
<gene>
    <name evidence="4" type="primary">HDR1</name>
    <name evidence="5" type="ordered locus">LOC_Os02g55080</name>
    <name evidence="8" type="ordered locus">Os02g0793900</name>
    <name evidence="6" type="ORF">OJ1249_F12.36</name>
    <name evidence="10" type="ORF">OsJ_08697</name>
    <name evidence="9" type="ORF">OSNPB_020793900</name>
    <name evidence="7" type="ORF">P0700F06.24</name>
</gene>
<keyword id="KW-0175">Coiled coil</keyword>
<keyword id="KW-0287">Flowering</keyword>
<keyword id="KW-0539">Nucleus</keyword>
<keyword id="KW-1185">Reference proteome</keyword>
<proteinExistence type="evidence at protein level"/>
<protein>
    <recommendedName>
        <fullName evidence="4">Protein HEADING DATE REPRESSOR 1</fullName>
    </recommendedName>
</protein>
<accession>Q6K678</accession>